<sequence length="378" mass="42747">MELQEVLHMNEGEGDTSYAKNASYNLALAKVKPFLEQCIRELLRANLPNINKCIKVADLGCASGPNTLLTVRDIVQSIDKVGQEEKNELERPTIQIFLNDLFQNDFNSVFKLLPSFYRKLEKENGRKIGSCLISAMPGSFYGRLFPEESMHFLHSCYSVHWLSQVPSGLVIELGIGANKGSIYSSKGCRPPVQKAYLDQFTKDFTTFLRIHSKELFSRGRMLLTCICKVDEFDEPNPLDLLDMAINDLIVEGLLEEEKLDSFNIPFFTPSAEEVKCIVEEEGSCEILYLETFKAHYDAAFSIDDDYPVRSHEQIKAEYVASLIRSVYEPILASHFGEAIMPDLFHRLAKHAAKVLHMGKGCYNNLIISLAKKPEKSDV</sequence>
<dbReference type="EC" id="2.1.1.159" evidence="5 7"/>
<dbReference type="EMBL" id="AB048794">
    <property type="protein sequence ID" value="BAB39216.1"/>
    <property type="molecule type" value="mRNA"/>
</dbReference>
<dbReference type="EMBL" id="AF494413">
    <property type="protein sequence ID" value="AAM18503.1"/>
    <property type="molecule type" value="mRNA"/>
</dbReference>
<dbReference type="EMBL" id="AB034700">
    <property type="protein sequence ID" value="BAC43756.1"/>
    <property type="molecule type" value="mRNA"/>
</dbReference>
<dbReference type="EMBL" id="AF494411">
    <property type="protein sequence ID" value="AAM18501.1"/>
    <property type="molecule type" value="mRNA"/>
</dbReference>
<dbReference type="EMBL" id="JX978511">
    <property type="protein sequence ID" value="AFV60439.1"/>
    <property type="molecule type" value="Genomic_DNA"/>
</dbReference>
<dbReference type="EMBL" id="JX978519">
    <property type="protein sequence ID" value="AFV60447.1"/>
    <property type="molecule type" value="mRNA"/>
</dbReference>
<dbReference type="SMR" id="Q9AVJ9"/>
<dbReference type="KEGG" id="ag:BAB39216"/>
<dbReference type="OrthoDB" id="1523883at2759"/>
<dbReference type="BRENDA" id="2.1.1.159">
    <property type="organism ID" value="1559"/>
</dbReference>
<dbReference type="BRENDA" id="2.1.1.160">
    <property type="organism ID" value="1559"/>
</dbReference>
<dbReference type="SABIO-RK" id="Q9AVJ9"/>
<dbReference type="Proteomes" id="UP000515148">
    <property type="component" value="Unplaced"/>
</dbReference>
<dbReference type="GO" id="GO:0005737">
    <property type="term" value="C:cytoplasm"/>
    <property type="evidence" value="ECO:0007669"/>
    <property type="project" value="UniProtKB-SubCell"/>
</dbReference>
<dbReference type="GO" id="GO:0102741">
    <property type="term" value="F:caffeine synthase activity"/>
    <property type="evidence" value="ECO:0007669"/>
    <property type="project" value="RHEA"/>
</dbReference>
<dbReference type="GO" id="GO:0046872">
    <property type="term" value="F:metal ion binding"/>
    <property type="evidence" value="ECO:0007669"/>
    <property type="project" value="UniProtKB-KW"/>
</dbReference>
<dbReference type="GO" id="GO:0009820">
    <property type="term" value="P:alkaloid metabolic process"/>
    <property type="evidence" value="ECO:0007669"/>
    <property type="project" value="UniProtKB-KW"/>
</dbReference>
<dbReference type="GO" id="GO:0032259">
    <property type="term" value="P:methylation"/>
    <property type="evidence" value="ECO:0007669"/>
    <property type="project" value="UniProtKB-KW"/>
</dbReference>
<dbReference type="Gene3D" id="1.10.1200.270">
    <property type="entry name" value="Methyltransferase, alpha-helical capping domain"/>
    <property type="match status" value="1"/>
</dbReference>
<dbReference type="Gene3D" id="3.40.50.150">
    <property type="entry name" value="Vaccinia Virus protein VP39"/>
    <property type="match status" value="1"/>
</dbReference>
<dbReference type="InterPro" id="IPR005299">
    <property type="entry name" value="MeTrfase_7"/>
</dbReference>
<dbReference type="InterPro" id="IPR042086">
    <property type="entry name" value="MeTrfase_capping"/>
</dbReference>
<dbReference type="InterPro" id="IPR029063">
    <property type="entry name" value="SAM-dependent_MTases_sf"/>
</dbReference>
<dbReference type="PANTHER" id="PTHR31009">
    <property type="entry name" value="S-ADENOSYL-L-METHIONINE:CARBOXYL METHYLTRANSFERASE FAMILY PROTEIN"/>
    <property type="match status" value="1"/>
</dbReference>
<dbReference type="Pfam" id="PF03492">
    <property type="entry name" value="Methyltransf_7"/>
    <property type="match status" value="1"/>
</dbReference>
<dbReference type="SUPFAM" id="SSF53335">
    <property type="entry name" value="S-adenosyl-L-methionine-dependent methyltransferases"/>
    <property type="match status" value="1"/>
</dbReference>
<proteinExistence type="evidence at protein level"/>
<reference key="1">
    <citation type="journal article" date="2001" name="J. Biol. Chem.">
        <title>7-Methylxanthine methyltransferase of coffee plants. Gene isolation and enzymatic properties.</title>
        <authorList>
            <person name="Ogawa M."/>
            <person name="Herai Y."/>
            <person name="Koizumi N."/>
            <person name="Kusano T."/>
            <person name="Sano H."/>
        </authorList>
    </citation>
    <scope>NUCLEOTIDE SEQUENCE [MRNA]</scope>
    <scope>FUNCTION</scope>
    <scope>CATALYTIC ACTIVITY</scope>
    <scope>BIOPHYSICOCHEMICAL PROPERTIES</scope>
    <scope>TISSUE SPECIFICITY</scope>
    <scope>SUBCELLULAR LOCATION</scope>
    <scope>PATHWAY</scope>
    <source>
        <strain>cv. Caturra</strain>
    </source>
</reference>
<reference key="2">
    <citation type="submission" date="2002-03" db="EMBL/GenBank/DDBJ databases">
        <title>N-methyltransferases in the genus Coffea.</title>
        <authorList>
            <person name="Kretschmar J.A."/>
            <person name="Baumann T.W."/>
        </authorList>
    </citation>
    <scope>NUCLEOTIDE SEQUENCE [MRNA]</scope>
    <source>
        <strain>cv. Catuai</strain>
        <tissue>Leaf</tissue>
    </source>
</reference>
<reference key="3">
    <citation type="journal article" date="2003" name="FEBS Lett.">
        <title>Isolation of a new dual-functional caffeine synthase gene encoding an enzyme for the conversion of 7-methylxanthine to caffeine from coffee (Coffea arabica L.).</title>
        <authorList>
            <person name="Mizuno K."/>
            <person name="Okuda A."/>
            <person name="Kato M."/>
            <person name="Yoneyama N."/>
            <person name="Tanaka H."/>
            <person name="Ashihara H."/>
            <person name="Fujimura T."/>
        </authorList>
    </citation>
    <scope>NUCLEOTIDE SEQUENCE [MRNA]</scope>
    <scope>BIOPHYSICOCHEMICAL PROPERTIES</scope>
</reference>
<reference key="4">
    <citation type="journal article" date="2003" name="Plant Physiol.">
        <title>Molecular cloning and functional characterization of three distinct N-methyltransferases involved in the caffeine biosynthetic pathway in coffee plants.</title>
        <authorList>
            <person name="Uefuji H."/>
            <person name="Ogita S."/>
            <person name="Yamaguchi Y."/>
            <person name="Koizumi N."/>
            <person name="Sano H."/>
        </authorList>
    </citation>
    <scope>NUCLEOTIDE SEQUENCE [MRNA]</scope>
    <scope>FUNCTION</scope>
    <scope>CATALYTIC ACTIVITY</scope>
    <scope>BIOPHYSICOCHEMICAL PROPERTIES</scope>
    <scope>TISSUE SPECIFICITY</scope>
    <scope>PATHWAY</scope>
</reference>
<reference key="5">
    <citation type="journal article" date="2015" name="Planta">
        <title>Differential regulation of caffeine metabolism in Coffea arabica (Arabica) and Coffea canephora (Robusta).</title>
        <authorList>
            <person name="Perrois C."/>
            <person name="Strickler S.R."/>
            <person name="Mathieu G."/>
            <person name="Lepelley M."/>
            <person name="Bedon L."/>
            <person name="Michaux S."/>
            <person name="Husson J."/>
            <person name="Mueller L."/>
            <person name="Privat I."/>
        </authorList>
    </citation>
    <scope>NUCLEOTIDE SEQUENCE [GENOMIC DNA / MRNA]</scope>
    <scope>TISSUE SPECIFICITY</scope>
    <scope>GENE FAMILY</scope>
    <scope>NOMENCLATURE</scope>
    <source>
        <strain>cv. Caturra</strain>
        <strain>cv. ET39</strain>
    </source>
</reference>
<reference key="6">
    <citation type="journal article" date="2008" name="Phytochemistry">
        <title>Caffeine and related purine alkaloids: biosynthesis, catabolism, function and genetic engineering.</title>
        <authorList>
            <person name="Ashihara H."/>
            <person name="Sano H."/>
            <person name="Crozier A."/>
        </authorList>
    </citation>
    <scope>FUNCTION</scope>
    <scope>REVIEW ON CAFFEINE BIOSYNTHESIS</scope>
    <scope>BIOTECHNOLOGY</scope>
</reference>
<organism>
    <name type="scientific">Coffea arabica</name>
    <name type="common">Arabian coffee</name>
    <dbReference type="NCBI Taxonomy" id="13443"/>
    <lineage>
        <taxon>Eukaryota</taxon>
        <taxon>Viridiplantae</taxon>
        <taxon>Streptophyta</taxon>
        <taxon>Embryophyta</taxon>
        <taxon>Tracheophyta</taxon>
        <taxon>Spermatophyta</taxon>
        <taxon>Magnoliopsida</taxon>
        <taxon>eudicotyledons</taxon>
        <taxon>Gunneridae</taxon>
        <taxon>Pentapetalae</taxon>
        <taxon>asterids</taxon>
        <taxon>lamiids</taxon>
        <taxon>Gentianales</taxon>
        <taxon>Rubiaceae</taxon>
        <taxon>Ixoroideae</taxon>
        <taxon>Gardenieae complex</taxon>
        <taxon>Bertiereae - Coffeeae clade</taxon>
        <taxon>Coffeeae</taxon>
        <taxon>Coffea</taxon>
    </lineage>
</organism>
<gene>
    <name evidence="12" type="primary">MXMT1</name>
    <name evidence="10" type="synonym">CTS1</name>
</gene>
<name>MXMT1_COFAR</name>
<keyword id="KW-0017">Alkaloid metabolism</keyword>
<keyword id="KW-0963">Cytoplasm</keyword>
<keyword id="KW-0460">Magnesium</keyword>
<keyword id="KW-0479">Metal-binding</keyword>
<keyword id="KW-0489">Methyltransferase</keyword>
<keyword id="KW-1185">Reference proteome</keyword>
<keyword id="KW-0949">S-adenosyl-L-methionine</keyword>
<keyword id="KW-0808">Transferase</keyword>
<evidence type="ECO:0000250" key="1">
    <source>
        <dbReference type="UniProtKB" id="A4GE69"/>
    </source>
</evidence>
<evidence type="ECO:0000250" key="2">
    <source>
        <dbReference type="UniProtKB" id="A4GE70"/>
    </source>
</evidence>
<evidence type="ECO:0000250" key="3">
    <source>
        <dbReference type="UniProtKB" id="Q9FLN8"/>
    </source>
</evidence>
<evidence type="ECO:0000250" key="4">
    <source>
        <dbReference type="UniProtKB" id="Q9FZN8"/>
    </source>
</evidence>
<evidence type="ECO:0000269" key="5">
    <source>
    </source>
</evidence>
<evidence type="ECO:0000269" key="6">
    <source>
    </source>
</evidence>
<evidence type="ECO:0000269" key="7">
    <source>
    </source>
</evidence>
<evidence type="ECO:0000269" key="8">
    <source>
    </source>
</evidence>
<evidence type="ECO:0000269" key="9">
    <source>
    </source>
</evidence>
<evidence type="ECO:0000303" key="10">
    <source>
    </source>
</evidence>
<evidence type="ECO:0000303" key="11">
    <source>
    </source>
</evidence>
<evidence type="ECO:0000303" key="12">
    <source>
    </source>
</evidence>
<evidence type="ECO:0000305" key="13"/>
<protein>
    <recommendedName>
        <fullName evidence="12">Monomethylxanthine methyltransferase 1</fullName>
        <shortName evidence="12">CaMXMT1</shortName>
        <ecNumber evidence="5 7">2.1.1.159</ecNumber>
    </recommendedName>
    <alternativeName>
        <fullName evidence="13">7-methylxanthine N-methyltransferase 1</fullName>
    </alternativeName>
    <alternativeName>
        <fullName evidence="10">Theobromine synthase 1</fullName>
    </alternativeName>
</protein>
<accession>Q9AVJ9</accession>
<accession>A0A096VHZ7</accession>
<accession>Q8H0G5</accession>
<accession>Q8RVM1</accession>
<comment type="function">
    <text evidence="5 7 11">Involved in the biosynthesis of caffeine. Catalyzes the conversion of 7-methylxanthine (7mX) to theobromine and of paraxanthine to caffeine. Has a 5-fold preference for 7mX.</text>
</comment>
<comment type="catalytic activity">
    <reaction evidence="5 7">
        <text>7-methylxanthine + S-adenosyl-L-methionine = theobromine + S-adenosyl-L-homocysteine + H(+)</text>
        <dbReference type="Rhea" id="RHEA:24604"/>
        <dbReference type="ChEBI" id="CHEBI:15378"/>
        <dbReference type="ChEBI" id="CHEBI:28946"/>
        <dbReference type="ChEBI" id="CHEBI:48991"/>
        <dbReference type="ChEBI" id="CHEBI:57856"/>
        <dbReference type="ChEBI" id="CHEBI:59789"/>
        <dbReference type="EC" id="2.1.1.159"/>
    </reaction>
    <physiologicalReaction direction="left-to-right" evidence="5 7">
        <dbReference type="Rhea" id="RHEA:24605"/>
    </physiologicalReaction>
</comment>
<comment type="cofactor">
    <cofactor evidence="3">
        <name>Mg(2+)</name>
        <dbReference type="ChEBI" id="CHEBI:18420"/>
    </cofactor>
    <text evidence="3">Binds 1 Mg(2+) ion per subunit.</text>
</comment>
<comment type="biophysicochemical properties">
    <kinetics>
        <KM evidence="5">50 uM for 7-methylxanthine</KM>
        <KM evidence="7">148 uM for 7-methylxanthine</KM>
        <KM evidence="7">458 uM for paraxanthine</KM>
        <KM evidence="5">11.9 uM for S-adenosyl-L-methionine</KM>
        <KM evidence="7">12 uM for S-adenosyl-L-methionine</KM>
        <Vmax evidence="5">7.14 pmol/min/ug enzyme toward 7-methylxanthine</Vmax>
        <Vmax evidence="5">7.94 pmol/min/ug enzyme toward S-adenosyl-L-methionine</Vmax>
    </kinetics>
    <phDependence>
        <text evidence="5 6 7">Optimum pH is 7.5.</text>
    </phDependence>
</comment>
<comment type="pathway">
    <text evidence="5 7">Alkaloid biosynthesis.</text>
</comment>
<comment type="subcellular location">
    <subcellularLocation>
        <location evidence="5">Cytoplasm</location>
    </subcellularLocation>
</comment>
<comment type="tissue specificity">
    <text evidence="5 7 9">Expressed, at low levels, in stems, young leaves, floral buds and immature fruits (grains), but not in roots, old leaves and mature fruits.</text>
</comment>
<comment type="biotechnology">
    <text evidence="8">Tobacco plants (Nicotiana tabacum cv. Xanthi) expressing CaXMT1, CaMXMT1 and CaDXMT1 accumulate caffeine and become less appetant and toxic for caterpillars cutworms (Spodoptera litura). Caffeine also stimulates endogenous defense mechanisms against other pathogens (e.g. tobacco mosaic virus and Pseudomonas syringae) by triggering the expression of defense-related genes.</text>
</comment>
<comment type="similarity">
    <text evidence="13">Belongs to the methyltransferase superfamily. Type-7 methyltransferase family.</text>
</comment>
<feature type="chain" id="PRO_0000408303" description="Monomethylxanthine methyltransferase 1">
    <location>
        <begin position="1"/>
        <end position="378"/>
    </location>
</feature>
<feature type="binding site" evidence="2">
    <location>
        <position position="18"/>
    </location>
    <ligand>
        <name>S-adenosyl-L-homocysteine</name>
        <dbReference type="ChEBI" id="CHEBI:57856"/>
    </ligand>
</feature>
<feature type="binding site" evidence="2">
    <location>
        <position position="61"/>
    </location>
    <ligand>
        <name>S-adenosyl-L-homocysteine</name>
        <dbReference type="ChEBI" id="CHEBI:57856"/>
    </ligand>
</feature>
<feature type="binding site" evidence="2">
    <location>
        <position position="66"/>
    </location>
    <ligand>
        <name>S-adenosyl-L-homocysteine</name>
        <dbReference type="ChEBI" id="CHEBI:57856"/>
    </ligand>
</feature>
<feature type="binding site" evidence="2">
    <location>
        <position position="100"/>
    </location>
    <ligand>
        <name>S-adenosyl-L-homocysteine</name>
        <dbReference type="ChEBI" id="CHEBI:57856"/>
    </ligand>
</feature>
<feature type="binding site" evidence="2">
    <location>
        <position position="101"/>
    </location>
    <ligand>
        <name>S-adenosyl-L-homocysteine</name>
        <dbReference type="ChEBI" id="CHEBI:57856"/>
    </ligand>
</feature>
<feature type="binding site" evidence="2">
    <location>
        <position position="139"/>
    </location>
    <ligand>
        <name>S-adenosyl-L-homocysteine</name>
        <dbReference type="ChEBI" id="CHEBI:57856"/>
    </ligand>
</feature>
<feature type="binding site" evidence="2">
    <location>
        <position position="140"/>
    </location>
    <ligand>
        <name>S-adenosyl-L-homocysteine</name>
        <dbReference type="ChEBI" id="CHEBI:57856"/>
    </ligand>
</feature>
<feature type="binding site" evidence="1">
    <location>
        <position position="156"/>
    </location>
    <ligand>
        <name>S-adenosyl-L-homocysteine</name>
        <dbReference type="ChEBI" id="CHEBI:57856"/>
    </ligand>
</feature>
<feature type="binding site" evidence="2">
    <location>
        <position position="157"/>
    </location>
    <ligand>
        <name>theobromine</name>
        <dbReference type="ChEBI" id="CHEBI:28946"/>
    </ligand>
</feature>
<feature type="binding site" evidence="2">
    <location>
        <position position="160"/>
    </location>
    <ligand>
        <name>theobromine</name>
        <dbReference type="ChEBI" id="CHEBI:28946"/>
    </ligand>
</feature>
<feature type="binding site" evidence="2">
    <location>
        <position position="161"/>
    </location>
    <ligand>
        <name>theobromine</name>
        <dbReference type="ChEBI" id="CHEBI:28946"/>
    </ligand>
</feature>
<feature type="binding site" evidence="3">
    <location>
        <position position="178"/>
    </location>
    <ligand>
        <name>Mg(2+)</name>
        <dbReference type="ChEBI" id="CHEBI:18420"/>
    </ligand>
</feature>
<feature type="binding site" evidence="3">
    <location>
        <position position="260"/>
    </location>
    <ligand>
        <name>Mg(2+)</name>
        <dbReference type="ChEBI" id="CHEBI:18420"/>
    </ligand>
</feature>
<feature type="binding site" evidence="3">
    <location>
        <position position="262"/>
    </location>
    <ligand>
        <name>Mg(2+)</name>
        <dbReference type="ChEBI" id="CHEBI:18420"/>
    </ligand>
</feature>
<feature type="binding site" evidence="3">
    <location>
        <position position="263"/>
    </location>
    <ligand>
        <name>Mg(2+)</name>
        <dbReference type="ChEBI" id="CHEBI:18420"/>
    </ligand>
</feature>
<feature type="binding site" evidence="2">
    <location>
        <position position="362"/>
    </location>
    <ligand>
        <name>theobromine</name>
        <dbReference type="ChEBI" id="CHEBI:28946"/>
    </ligand>
</feature>
<feature type="site" description="Involved in substrate discrimination" evidence="4">
    <location>
        <position position="154"/>
    </location>
</feature>
<feature type="site" description="Involved in substrate discrimination" evidence="4">
    <location>
        <position position="266"/>
    </location>
</feature>
<feature type="site" description="Involved in substrate discrimination" evidence="4">
    <location>
        <position position="337"/>
    </location>
</feature>
<feature type="sequence conflict" description="In Ref. 2; AAM18503." evidence="13" ref="2">
    <original>E</original>
    <variation>G</variation>
    <location>
        <position position="11"/>
    </location>
</feature>
<feature type="sequence conflict" description="In Ref. 2; AAM18503." evidence="13" ref="2">
    <original>A</original>
    <variation>S</variation>
    <location>
        <position position="22"/>
    </location>
</feature>
<feature type="sequence conflict" description="In Ref. 2; AAM18503." evidence="13" ref="2">
    <original>F</original>
    <variation>V</variation>
    <location>
        <position position="34"/>
    </location>
</feature>
<feature type="sequence conflict" description="In Ref. 2; AAM18503." evidence="13" ref="2">
    <original>K</original>
    <variation>N</variation>
    <location>
        <position position="52"/>
    </location>
</feature>
<feature type="sequence conflict" description="In Ref. 2; AAM18503." evidence="13" ref="2">
    <original>L</original>
    <variation>I</variation>
    <location>
        <position position="153"/>
    </location>
</feature>
<feature type="sequence conflict" description="In Ref. 2; AAM18503." evidence="13" ref="2">
    <original>V</original>
    <variation>F</variation>
    <location>
        <position position="159"/>
    </location>
</feature>
<feature type="sequence conflict" description="In Ref. 2; AAM18503." evidence="13" ref="2">
    <original>G</original>
    <variation>S</variation>
    <location>
        <position position="176"/>
    </location>
</feature>
<feature type="sequence conflict" description="In Ref. 3; BAC43756." evidence="13" ref="3">
    <original>E</original>
    <variation>V</variation>
    <location>
        <position position="231"/>
    </location>
</feature>